<proteinExistence type="inferred from homology"/>
<dbReference type="EMBL" id="D17510">
    <property type="protein sequence ID" value="BAA04356.1"/>
    <property type="molecule type" value="Genomic_DNA"/>
</dbReference>
<dbReference type="PIR" id="T07478">
    <property type="entry name" value="T07478"/>
</dbReference>
<dbReference type="RefSeq" id="NP_042399.1">
    <property type="nucleotide sequence ID" value="NC_001631.1"/>
</dbReference>
<dbReference type="SMR" id="P41618"/>
<dbReference type="GeneID" id="809052"/>
<dbReference type="GO" id="GO:0009535">
    <property type="term" value="C:chloroplast thylakoid membrane"/>
    <property type="evidence" value="ECO:0007669"/>
    <property type="project" value="UniProtKB-SubCell"/>
</dbReference>
<dbReference type="GO" id="GO:0009539">
    <property type="term" value="C:photosystem II reaction center"/>
    <property type="evidence" value="ECO:0007669"/>
    <property type="project" value="InterPro"/>
</dbReference>
<dbReference type="GO" id="GO:0015979">
    <property type="term" value="P:photosynthesis"/>
    <property type="evidence" value="ECO:0007669"/>
    <property type="project" value="UniProtKB-UniRule"/>
</dbReference>
<dbReference type="Gene3D" id="6.10.250.2070">
    <property type="match status" value="1"/>
</dbReference>
<dbReference type="HAMAP" id="MF_01305">
    <property type="entry name" value="PSII_PsbJ"/>
    <property type="match status" value="1"/>
</dbReference>
<dbReference type="InterPro" id="IPR002682">
    <property type="entry name" value="PSII_PsbJ"/>
</dbReference>
<dbReference type="InterPro" id="IPR037267">
    <property type="entry name" value="PSII_PsbJ_sf"/>
</dbReference>
<dbReference type="NCBIfam" id="NF002722">
    <property type="entry name" value="PRK02565.1"/>
    <property type="match status" value="1"/>
</dbReference>
<dbReference type="PANTHER" id="PTHR34812">
    <property type="entry name" value="PHOTOSYSTEM II REACTION CENTER PROTEIN J"/>
    <property type="match status" value="1"/>
</dbReference>
<dbReference type="PANTHER" id="PTHR34812:SF3">
    <property type="entry name" value="PHOTOSYSTEM II REACTION CENTER PROTEIN J"/>
    <property type="match status" value="1"/>
</dbReference>
<dbReference type="Pfam" id="PF01788">
    <property type="entry name" value="PsbJ"/>
    <property type="match status" value="1"/>
</dbReference>
<dbReference type="SUPFAM" id="SSF161021">
    <property type="entry name" value="Photosystem II reaction center protein J, PsbJ"/>
    <property type="match status" value="1"/>
</dbReference>
<keyword id="KW-0150">Chloroplast</keyword>
<keyword id="KW-0472">Membrane</keyword>
<keyword id="KW-0602">Photosynthesis</keyword>
<keyword id="KW-0604">Photosystem II</keyword>
<keyword id="KW-0934">Plastid</keyword>
<keyword id="KW-0674">Reaction center</keyword>
<keyword id="KW-0793">Thylakoid</keyword>
<keyword id="KW-0812">Transmembrane</keyword>
<keyword id="KW-1133">Transmembrane helix</keyword>
<reference key="1">
    <citation type="journal article" date="1994" name="Proc. Natl. Acad. Sci. U.S.A.">
        <title>Loss of all ndh genes as determined by sequencing the entire chloroplast genome of the black pine Pinus thunbergii.</title>
        <authorList>
            <person name="Wakasugi T."/>
            <person name="Tsudzuki J."/>
            <person name="Ito S."/>
            <person name="Nakashima K."/>
            <person name="Tsudzuki T."/>
            <person name="Sugiura M."/>
        </authorList>
    </citation>
    <scope>NUCLEOTIDE SEQUENCE [LARGE SCALE GENOMIC DNA]</scope>
</reference>
<feature type="chain" id="PRO_0000216612" description="Photosystem II reaction center protein J">
    <location>
        <begin position="1"/>
        <end position="40"/>
    </location>
</feature>
<feature type="transmembrane region" description="Helical" evidence="1">
    <location>
        <begin position="8"/>
        <end position="28"/>
    </location>
</feature>
<name>PSBJ_PINTH</name>
<accession>P41618</accession>
<evidence type="ECO:0000255" key="1">
    <source>
        <dbReference type="HAMAP-Rule" id="MF_01305"/>
    </source>
</evidence>
<sequence>MADTTGRIPLWLIGTVTGIIVIGLLGVFFYGSYSGLGSSL</sequence>
<comment type="function">
    <text evidence="1">One of the components of the core complex of photosystem II (PSII). PSII is a light-driven water:plastoquinone oxidoreductase that uses light energy to abstract electrons from H(2)O, generating O(2) and a proton gradient subsequently used for ATP formation. It consists of a core antenna complex that captures photons, and an electron transfer chain that converts photonic excitation into a charge separation.</text>
</comment>
<comment type="subunit">
    <text evidence="1">PSII is composed of 1 copy each of membrane proteins PsbA, PsbB, PsbC, PsbD, PsbE, PsbF, PsbH, PsbI, PsbJ, PsbK, PsbL, PsbM, PsbT, PsbX, PsbY, PsbZ, Psb30/Ycf12, at least 3 peripheral proteins of the oxygen-evolving complex and a large number of cofactors. It forms dimeric complexes.</text>
</comment>
<comment type="subcellular location">
    <subcellularLocation>
        <location evidence="1">Plastid</location>
        <location evidence="1">Chloroplast thylakoid membrane</location>
        <topology evidence="1">Single-pass membrane protein</topology>
    </subcellularLocation>
</comment>
<comment type="similarity">
    <text evidence="1">Belongs to the PsbJ family.</text>
</comment>
<protein>
    <recommendedName>
        <fullName evidence="1">Photosystem II reaction center protein J</fullName>
        <shortName evidence="1">PSII-J</shortName>
    </recommendedName>
</protein>
<organism>
    <name type="scientific">Pinus thunbergii</name>
    <name type="common">Japanese black pine</name>
    <name type="synonym">Pinus thunbergiana</name>
    <dbReference type="NCBI Taxonomy" id="3350"/>
    <lineage>
        <taxon>Eukaryota</taxon>
        <taxon>Viridiplantae</taxon>
        <taxon>Streptophyta</taxon>
        <taxon>Embryophyta</taxon>
        <taxon>Tracheophyta</taxon>
        <taxon>Spermatophyta</taxon>
        <taxon>Pinopsida</taxon>
        <taxon>Pinidae</taxon>
        <taxon>Conifers I</taxon>
        <taxon>Pinales</taxon>
        <taxon>Pinaceae</taxon>
        <taxon>Pinus</taxon>
        <taxon>Pinus subgen. Pinus</taxon>
    </lineage>
</organism>
<geneLocation type="chloroplast"/>
<gene>
    <name evidence="1" type="primary">psbJ</name>
</gene>